<feature type="chain" id="PRO_1000121642" description="Large ribosomal subunit protein bL28">
    <location>
        <begin position="1"/>
        <end position="62"/>
    </location>
</feature>
<evidence type="ECO:0000255" key="1">
    <source>
        <dbReference type="HAMAP-Rule" id="MF_00373"/>
    </source>
</evidence>
<evidence type="ECO:0000305" key="2"/>
<organism>
    <name type="scientific">Helicobacter pylori (strain P12)</name>
    <dbReference type="NCBI Taxonomy" id="570508"/>
    <lineage>
        <taxon>Bacteria</taxon>
        <taxon>Pseudomonadati</taxon>
        <taxon>Campylobacterota</taxon>
        <taxon>Epsilonproteobacteria</taxon>
        <taxon>Campylobacterales</taxon>
        <taxon>Helicobacteraceae</taxon>
        <taxon>Helicobacter</taxon>
    </lineage>
</organism>
<dbReference type="EMBL" id="CP001217">
    <property type="protein sequence ID" value="ACJ07653.1"/>
    <property type="molecule type" value="Genomic_DNA"/>
</dbReference>
<dbReference type="SMR" id="B6JL75"/>
<dbReference type="KEGG" id="hpp:HPP12_0499"/>
<dbReference type="HOGENOM" id="CLU_064548_7_2_7"/>
<dbReference type="Proteomes" id="UP000008198">
    <property type="component" value="Chromosome"/>
</dbReference>
<dbReference type="GO" id="GO:1990904">
    <property type="term" value="C:ribonucleoprotein complex"/>
    <property type="evidence" value="ECO:0007669"/>
    <property type="project" value="UniProtKB-KW"/>
</dbReference>
<dbReference type="GO" id="GO:0005840">
    <property type="term" value="C:ribosome"/>
    <property type="evidence" value="ECO:0007669"/>
    <property type="project" value="UniProtKB-KW"/>
</dbReference>
<dbReference type="GO" id="GO:0003735">
    <property type="term" value="F:structural constituent of ribosome"/>
    <property type="evidence" value="ECO:0007669"/>
    <property type="project" value="InterPro"/>
</dbReference>
<dbReference type="GO" id="GO:0006412">
    <property type="term" value="P:translation"/>
    <property type="evidence" value="ECO:0007669"/>
    <property type="project" value="UniProtKB-UniRule"/>
</dbReference>
<dbReference type="Gene3D" id="2.30.170.40">
    <property type="entry name" value="Ribosomal protein L28/L24"/>
    <property type="match status" value="1"/>
</dbReference>
<dbReference type="HAMAP" id="MF_00373">
    <property type="entry name" value="Ribosomal_bL28"/>
    <property type="match status" value="1"/>
</dbReference>
<dbReference type="InterPro" id="IPR050096">
    <property type="entry name" value="Bacterial_rp_bL28"/>
</dbReference>
<dbReference type="InterPro" id="IPR026569">
    <property type="entry name" value="Ribosomal_bL28"/>
</dbReference>
<dbReference type="InterPro" id="IPR034704">
    <property type="entry name" value="Ribosomal_bL28/bL31-like_sf"/>
</dbReference>
<dbReference type="InterPro" id="IPR001383">
    <property type="entry name" value="Ribosomal_bL28_bact-type"/>
</dbReference>
<dbReference type="InterPro" id="IPR037147">
    <property type="entry name" value="Ribosomal_bL28_sf"/>
</dbReference>
<dbReference type="NCBIfam" id="TIGR00009">
    <property type="entry name" value="L28"/>
    <property type="match status" value="1"/>
</dbReference>
<dbReference type="PANTHER" id="PTHR39080">
    <property type="entry name" value="50S RIBOSOMAL PROTEIN L28"/>
    <property type="match status" value="1"/>
</dbReference>
<dbReference type="PANTHER" id="PTHR39080:SF1">
    <property type="entry name" value="LARGE RIBOSOMAL SUBUNIT PROTEIN BL28A"/>
    <property type="match status" value="1"/>
</dbReference>
<dbReference type="Pfam" id="PF00830">
    <property type="entry name" value="Ribosomal_L28"/>
    <property type="match status" value="1"/>
</dbReference>
<dbReference type="SUPFAM" id="SSF143800">
    <property type="entry name" value="L28p-like"/>
    <property type="match status" value="1"/>
</dbReference>
<sequence>MAKRCALTFKGPMIGNHVSHANNKNKRRLLPNLRSIKIQLDDGTTKRIKVAASTLRTMRKGA</sequence>
<comment type="similarity">
    <text evidence="1">Belongs to the bacterial ribosomal protein bL28 family.</text>
</comment>
<reference key="1">
    <citation type="submission" date="2008-10" db="EMBL/GenBank/DDBJ databases">
        <title>The complete genome sequence of Helicobacter pylori strain P12.</title>
        <authorList>
            <person name="Fischer W."/>
            <person name="Windhager L."/>
            <person name="Karnholz A."/>
            <person name="Zeiller M."/>
            <person name="Zimmer R."/>
            <person name="Haas R."/>
        </authorList>
    </citation>
    <scope>NUCLEOTIDE SEQUENCE [LARGE SCALE GENOMIC DNA]</scope>
    <source>
        <strain>P12</strain>
    </source>
</reference>
<gene>
    <name evidence="1" type="primary">rpmB</name>
    <name type="ordered locus">HPP12_0499</name>
</gene>
<protein>
    <recommendedName>
        <fullName evidence="1">Large ribosomal subunit protein bL28</fullName>
    </recommendedName>
    <alternativeName>
        <fullName evidence="2">50S ribosomal protein L28</fullName>
    </alternativeName>
</protein>
<keyword id="KW-0687">Ribonucleoprotein</keyword>
<keyword id="KW-0689">Ribosomal protein</keyword>
<accession>B6JL75</accession>
<name>RL28_HELP2</name>
<proteinExistence type="inferred from homology"/>